<accession>B1GZ85</accession>
<sequence length="96" mass="10891">MDIRNIIKRPIVTEKAVLMKEKSNKYTFVVDKSANKFQIKYAVETLFNVKVKSVHTSNCVGKSLKVGRYAAGYRSDWKKAIVKLGKGQEIQLADKV</sequence>
<comment type="function">
    <text evidence="1">One of the early assembly proteins it binds 23S rRNA. One of the proteins that surrounds the polypeptide exit tunnel on the outside of the ribosome. Forms the main docking site for trigger factor binding to the ribosome.</text>
</comment>
<comment type="subunit">
    <text evidence="1">Part of the 50S ribosomal subunit. Contacts protein L29, and trigger factor when it is bound to the ribosome.</text>
</comment>
<comment type="similarity">
    <text evidence="1">Belongs to the universal ribosomal protein uL23 family.</text>
</comment>
<gene>
    <name evidence="1" type="primary">rplW</name>
    <name type="ordered locus">TGRD_084</name>
</gene>
<dbReference type="EMBL" id="AP009510">
    <property type="protein sequence ID" value="BAG13567.1"/>
    <property type="molecule type" value="Genomic_DNA"/>
</dbReference>
<dbReference type="RefSeq" id="WP_015423096.1">
    <property type="nucleotide sequence ID" value="NC_020419.1"/>
</dbReference>
<dbReference type="SMR" id="B1GZ85"/>
<dbReference type="STRING" id="471821.TGRD_084"/>
<dbReference type="KEGG" id="rsd:TGRD_084"/>
<dbReference type="PATRIC" id="fig|471821.5.peg.128"/>
<dbReference type="HOGENOM" id="CLU_037562_3_2_0"/>
<dbReference type="Proteomes" id="UP000001691">
    <property type="component" value="Chromosome"/>
</dbReference>
<dbReference type="GO" id="GO:1990904">
    <property type="term" value="C:ribonucleoprotein complex"/>
    <property type="evidence" value="ECO:0007669"/>
    <property type="project" value="UniProtKB-KW"/>
</dbReference>
<dbReference type="GO" id="GO:0005840">
    <property type="term" value="C:ribosome"/>
    <property type="evidence" value="ECO:0007669"/>
    <property type="project" value="UniProtKB-KW"/>
</dbReference>
<dbReference type="GO" id="GO:0019843">
    <property type="term" value="F:rRNA binding"/>
    <property type="evidence" value="ECO:0007669"/>
    <property type="project" value="UniProtKB-UniRule"/>
</dbReference>
<dbReference type="GO" id="GO:0003735">
    <property type="term" value="F:structural constituent of ribosome"/>
    <property type="evidence" value="ECO:0007669"/>
    <property type="project" value="InterPro"/>
</dbReference>
<dbReference type="GO" id="GO:0006412">
    <property type="term" value="P:translation"/>
    <property type="evidence" value="ECO:0007669"/>
    <property type="project" value="UniProtKB-UniRule"/>
</dbReference>
<dbReference type="FunFam" id="3.30.70.330:FF:000001">
    <property type="entry name" value="50S ribosomal protein L23"/>
    <property type="match status" value="1"/>
</dbReference>
<dbReference type="Gene3D" id="3.30.70.330">
    <property type="match status" value="1"/>
</dbReference>
<dbReference type="HAMAP" id="MF_01369_B">
    <property type="entry name" value="Ribosomal_uL23_B"/>
    <property type="match status" value="1"/>
</dbReference>
<dbReference type="InterPro" id="IPR012677">
    <property type="entry name" value="Nucleotide-bd_a/b_plait_sf"/>
</dbReference>
<dbReference type="InterPro" id="IPR013025">
    <property type="entry name" value="Ribosomal_uL23-like"/>
</dbReference>
<dbReference type="InterPro" id="IPR012678">
    <property type="entry name" value="Ribosomal_uL23/eL15/eS24_sf"/>
</dbReference>
<dbReference type="NCBIfam" id="NF004359">
    <property type="entry name" value="PRK05738.1-3"/>
    <property type="match status" value="1"/>
</dbReference>
<dbReference type="NCBIfam" id="NF004363">
    <property type="entry name" value="PRK05738.2-4"/>
    <property type="match status" value="1"/>
</dbReference>
<dbReference type="PANTHER" id="PTHR11620">
    <property type="entry name" value="60S RIBOSOMAL PROTEIN L23A"/>
    <property type="match status" value="1"/>
</dbReference>
<dbReference type="Pfam" id="PF00276">
    <property type="entry name" value="Ribosomal_L23"/>
    <property type="match status" value="1"/>
</dbReference>
<dbReference type="SUPFAM" id="SSF54189">
    <property type="entry name" value="Ribosomal proteins S24e, L23 and L15e"/>
    <property type="match status" value="1"/>
</dbReference>
<feature type="chain" id="PRO_1000184113" description="Large ribosomal subunit protein uL23">
    <location>
        <begin position="1"/>
        <end position="96"/>
    </location>
</feature>
<evidence type="ECO:0000255" key="1">
    <source>
        <dbReference type="HAMAP-Rule" id="MF_01369"/>
    </source>
</evidence>
<evidence type="ECO:0000305" key="2"/>
<reference key="1">
    <citation type="journal article" date="2008" name="Proc. Natl. Acad. Sci. U.S.A.">
        <title>Complete genome of the uncultured termite group 1 bacteria in a single host protist cell.</title>
        <authorList>
            <person name="Hongoh Y."/>
            <person name="Sharma V.K."/>
            <person name="Prakash T."/>
            <person name="Noda S."/>
            <person name="Taylor T.D."/>
            <person name="Kudo T."/>
            <person name="Sakaki Y."/>
            <person name="Toyoda A."/>
            <person name="Hattori M."/>
            <person name="Ohkuma M."/>
        </authorList>
    </citation>
    <scope>NUCLEOTIDE SEQUENCE [LARGE SCALE GENOMIC DNA]</scope>
</reference>
<keyword id="KW-0687">Ribonucleoprotein</keyword>
<keyword id="KW-0689">Ribosomal protein</keyword>
<keyword id="KW-0694">RNA-binding</keyword>
<keyword id="KW-0699">rRNA-binding</keyword>
<name>RL23_ENDTX</name>
<organism>
    <name type="scientific">Endomicrobium trichonymphae</name>
    <dbReference type="NCBI Taxonomy" id="1408204"/>
    <lineage>
        <taxon>Bacteria</taxon>
        <taxon>Pseudomonadati</taxon>
        <taxon>Elusimicrobiota</taxon>
        <taxon>Endomicrobiia</taxon>
        <taxon>Endomicrobiales</taxon>
        <taxon>Endomicrobiaceae</taxon>
        <taxon>Candidatus Endomicrobiellum</taxon>
    </lineage>
</organism>
<proteinExistence type="inferred from homology"/>
<protein>
    <recommendedName>
        <fullName evidence="1">Large ribosomal subunit protein uL23</fullName>
    </recommendedName>
    <alternativeName>
        <fullName evidence="2">50S ribosomal protein L23</fullName>
    </alternativeName>
</protein>